<comment type="function">
    <text evidence="1">Functions within a multiprotein E3 ubiquitin ligase complex, catalyzing the covalent attachment of ubiquitin moieties onto substrate proteins. Substrates include SYT11 and VDAC1. Other substrates are BCL2, CCNE1, GPR37, RHOT1/MIRO1, MFN1, MFN2, STUB1, SNCAIP, SEPTIN5, TOMM20, USP30, ZNF746, MIRO1 and AIMP2. Mediates monoubiquitination as well as 'Lys-6', 'Lys-11', 'Lys-48'-linked and 'Lys-63'-linked polyubiquitination of substrates depending on the context. Participates in the removal and/or detoxification of abnormally folded or damaged protein by mediating 'Lys-63'-linked polyubiquitination of misfolded proteins such as PARK7: 'Lys-63'-linked polyubiquitinated misfolded proteins are then recognized by HDAC6, leading to their recruitment to aggresomes, followed by degradation. Mediates 'Lys-63'-linked polyubiquitination of a 22 kDa O-linked glycosylated isoform of SNCAIP, possibly playing a role in Lewy-body formation. Mediates monoubiquitination of BCL2, thereby acting as a positive regulator of autophagy. Protects against mitochondrial dysfunction during cellular stress, by acting downstream of PINK1 to coordinate mitochondrial quality control mechanisms that remove and replace dysfunctional mitochondrial components. Depending on the severity of mitochondrial damage and/or dysfunction, activity ranges from preventing apoptosis and stimulating mitochondrial biogenesis to regulating mitochondrial dynamics and eliminating severely damaged mitochondria via mitophagy. Activation and recruitment onto the outer membrane of damaged/dysfunctional mitochondria (OMM) requires PINK1-mediated phosphorylation of both PRKN and ubiquitin. After mitochondrial damage, functions with PINK1 to mediate the decision between mitophagy or preventing apoptosis by inducing either the poly- or monoubiquitination of VDAC1, respectively; polyubiquitination of VDAC1 promotes mitophagy, while monoubiquitination of VDAC1 decreases mitochondrial calcium influx which ultimately inhibits apoptosis. When cellular stress results in irreversible mitochondrial damage, promotes the autophagic degradation of dysfunctional depolarized mitochondria (mitophagy) by promoting the ubiquitination of mitochondrial proteins such as TOMM20, RHOT1/MIRO1, MFN1 and USP30. Preferentially assembles 'Lys-6'-, 'Lys-11'- and 'Lys-63'-linked polyubiquitin chains, leading to mitophagy. The PINK1-PRKN pathway also promotes fission of damaged mitochondria by PINK1-mediated phosphorylation which promotes the PRKN-dependent degradation of mitochondrial proteins involved in fission such as MFN2. This prevents the refusion of unhealthy mitochondria with the mitochondrial network or initiates mitochondrial fragmentation facilitating their later engulfment by autophagosomes. Regulates motility of damaged mitochondria via the ubiquitination and subsequent degradation of MIRO1 and MIRO2; in motor neurons, this likely inhibits mitochondrial intracellular anterograde transport along the axons which probably increases the chance of the mitochondria undergoing mitophagy in the soma. Involved in mitochondrial biogenesis via the 'Lys-48'-linked polyubiquitination of transcriptional repressor ZNF746/PARIS which leads to its subsequent proteasomal degradation and allows activation of the transcription factor PPARGC1A. Limits the production of reactive oxygen species (ROS). Regulates cyclin-E during neuronal apoptosis. In collaboration with CHPF isoform 2, may enhance cell viability and protect cells from oxidative stress. Independently of its ubiquitin ligase activity, protects from apoptosis by the transcriptional repression of p53/TP53. May protect neurons against alpha synuclein toxicity, proteasomal dysfunction, GPR37 accumulation, and kainate-induced excitotoxicity. May play a role in controlling neurotransmitter trafficking at the presynaptic terminal and in calcium-dependent exocytosis. May represent a tumor suppressor gene.</text>
</comment>
<comment type="catalytic activity">
    <reaction evidence="8">
        <text>[E2 ubiquitin-conjugating enzyme]-S-ubiquitinyl-L-cysteine + [acceptor protein]-L-lysine = [E2 ubiquitin-conjugating enzyme]-L-cysteine + [acceptor protein]-N(6)-ubiquitinyl-L-lysine.</text>
        <dbReference type="EC" id="2.3.2.31"/>
    </reaction>
</comment>
<comment type="activity regulation">
    <text evidence="1 8">In the autoinhibited state the side chain of Phe-463 inserts into a hydrophobic groove in RING-0, occluding the ubiquitin acceptor site Cys-431, whereas the REP repressor element binds RING-1 and blocks its E2-binding site. Activation of PRKN requires 2 steps: (1) phosphorylation at Ser-65 by PINK1 and (2) binding to phosphorylated ubiquitin, leading to unlock repression of the catalytic Cys-431 by the RING-0 region via an allosteric mechanism and converting PRKN to its fully-active form. According to another report, phosphorylation at Ser-65 by PINK1 is not essential for activation and only binding to phosphorylated ubiquitin is essential to unlock repression. In addition, ISG15 conjugation positively regulates its ubiquitin E3 ligase activity by suppressing the intramolecular interaction that maintains its autoinhibited conformation.</text>
</comment>
<comment type="pathway">
    <text>Protein modification; protein ubiquitination.</text>
</comment>
<comment type="subunit">
    <text evidence="1 2">Forms an E3 ubiquitin ligase complex with UBE2L3 or UBE2L6. Mediates 'Lys-63'-linked polyubiquitination by associating with UBE2V1. Part of a SCF-like complex, consisting of PRKN, CUL1 and FBXW7. Interacts with SNCAIP. Binds to the C2A and C2B domains of SYT11. Interacts and regulates the turnover of SEPTIN5. Part of a complex, including STUB1, HSP70 and GPR37. The amount of STUB1 in the complex increases during ER stress. STUB1 promotes the dissociation of HSP70 from PRKN and GPR37, thus facilitating PRKN-mediated GPR37 ubiquitination. HSP70 transiently associates with unfolded GPR37 and inhibits the E3 activity of PRKN, whereas, STUB1 enhances the E3 activity of PRKN through promotion of dissociation of HSP70 from PRKN-GPR37 complexes. Interacts with PSMD4 and PACRG. Interacts with LRRK2. Interacts with RANBP2. Interacts with SUMO1 but not SUMO2, which promotes nuclear localization and autoubiquitination. Interacts (via first RING-type domain) with AIMP2 (via N-terminus). Interacts with PSMA7 and RNF41. Interacts with PINK1. Forms a complex with PINK1 and PARK7. Interacts with CHPF, the interaction with isoform 2 may facilitate PRKN transport into the mitochondria. Interacts with MFN2 (phosphorylated), promotes PRKN localization in dysfunctional depolarized mitochondria. Interacts with FBXO7; this promotes translocation to dysfunctional depolarized mitochondria. Interacts with ZNF746. Interacts with heat shock protein 70 family members, including HSPA1L, HSPA1A and HSPA8; interaction HSPA1L promotes translocation to damaged mitochondria. Interacts with BAG4 and, to a lesser extent, BAG5; interaction with BAG4 inhibits translocation to damaged mitochondria. Forms a complex with PRKN and PARK7. Interacts with AMBRA1 (By similarity).</text>
</comment>
<comment type="interaction">
    <interactant intactId="EBI-973793">
        <id>Q9JK66</id>
    </interactant>
    <interactant intactId="EBI-973937">
        <id>D4A054</id>
        <label>Ranbp2</label>
    </interactant>
    <organismsDiffer>false</organismsDiffer>
    <experiments>2</experiments>
</comment>
<comment type="subcellular location">
    <subcellularLocation>
        <location evidence="7">Cytoplasm</location>
        <location evidence="7">Cytosol</location>
    </subcellularLocation>
    <subcellularLocation>
        <location evidence="1">Nucleus</location>
    </subcellularLocation>
    <subcellularLocation>
        <location evidence="1">Endoplasmic reticulum</location>
    </subcellularLocation>
    <subcellularLocation>
        <location evidence="1">Mitochondrion</location>
    </subcellularLocation>
    <subcellularLocation>
        <location evidence="2">Mitochondrion outer membrane</location>
    </subcellularLocation>
    <subcellularLocation>
        <location evidence="7">Cell projection</location>
        <location evidence="7">Neuron projection</location>
    </subcellularLocation>
    <subcellularLocation>
        <location evidence="2">Postsynaptic density</location>
    </subcellularLocation>
    <subcellularLocation>
        <location evidence="2">Presynapse</location>
    </subcellularLocation>
    <text evidence="1">Mainly localizes in the cytosol. Co-localizes with SYT11 in neutrites. Co-localizes with SNCAIP in brainstem Lewy bodies. Translocates to dysfunctional mitochondria that have lost the mitochondrial membrane potential; recruitment to mitochondria is PINK1-dependent. Mitochondrial localization also gradually increases with cellular growth.</text>
</comment>
<comment type="alternative products">
    <event type="alternative splicing"/>
    <isoform>
        <id>Q9JK66-1</id>
        <name>1</name>
        <sequence type="displayed"/>
    </isoform>
    <isoform>
        <id>Q9JK66-2</id>
        <name>2</name>
        <sequence type="described" ref="VSP_011722 VSP_011723"/>
    </isoform>
    <isoform>
        <id>Q9JK66-3</id>
        <name>3</name>
        <sequence type="described" ref="VSP_011717"/>
    </isoform>
    <isoform>
        <id>Q9JK66-4</id>
        <name>4</name>
        <sequence type="described" ref="VSP_011718"/>
    </isoform>
    <isoform>
        <id>Q9JK66-5</id>
        <name>5</name>
        <sequence type="described" ref="VSP_011719"/>
    </isoform>
    <isoform>
        <id>Q9JK66-6</id>
        <name>6</name>
        <sequence type="described" ref="VSP_011717 VSP_011720 VSP_011721"/>
    </isoform>
</comment>
<comment type="tissue specificity">
    <text evidence="6">Largely confined to neuronal elements, including fibers and neuropil. Highly expressed at the forebrain level, in pyramidal cells of layer V, in various cortical regions and cerebellum. Expressed in the nucleus of diagonal band of Broca, nucleus basalis, bed nucleus of the stria terminalis, and olfactory tubercle. Moderate expression is seen in most neurons of the subthalamic nucleus, heart, skeletal muscle and testis. Moderate expression was found in frontal cortex, parietal cortex, cerebellum, heart, skeletal muscle and testis.</text>
</comment>
<comment type="domain">
    <text evidence="1">The ubiquitin-like domain binds the PSMD4 subunit of 26S proteasomes.</text>
</comment>
<comment type="domain">
    <text evidence="1">The RING-type 1 zinc finger domain is required to repress p53/TP53 transcription.</text>
</comment>
<comment type="domain">
    <text evidence="1">Members of the RBR family are atypical E3 ligases. They interact with the E2 conjugating enzyme UBE2L3 and function like HECT-type E3 enzymes: they bind E2s via the first RING domain, but require an obligate trans-thiolation step during the ubiquitin transfer, requiring a conserved cysteine residue in the second RING domain.</text>
</comment>
<comment type="PTM">
    <text evidence="1 8">Auto-ubiquitinates in an E2-dependent manner leading to its own degradation (PubMed:23661642). Also polyubiquitinated by RNF41 for proteasomal degradation (By similarity).</text>
</comment>
<comment type="PTM">
    <text evidence="1">S-nitrosylated.</text>
</comment>
<comment type="PTM">
    <text evidence="1">Phosphorylated. Activation requires phosphorylation at Ser-65 by PINK1 and binding to PINK1 phosphorylated ubiquitin. Phosphorylation at Thr-175 by PINK1 and at Thr-217 is important for mitochondrial localization.</text>
</comment>
<comment type="similarity">
    <text evidence="10">Belongs to the RBR family. Parkin subfamily.</text>
</comment>
<dbReference type="EC" id="2.3.2.31" evidence="8"/>
<dbReference type="EMBL" id="AF343574">
    <property type="protein sequence ID" value="AAL73348.1"/>
    <property type="molecule type" value="mRNA"/>
</dbReference>
<dbReference type="EMBL" id="AF381277">
    <property type="protein sequence ID" value="AAM21452.1"/>
    <property type="molecule type" value="mRNA"/>
</dbReference>
<dbReference type="EMBL" id="AF381278">
    <property type="protein sequence ID" value="AAM21453.1"/>
    <property type="molecule type" value="mRNA"/>
</dbReference>
<dbReference type="EMBL" id="AF381279">
    <property type="protein sequence ID" value="AAM21454.1"/>
    <property type="molecule type" value="mRNA"/>
</dbReference>
<dbReference type="EMBL" id="AF381280">
    <property type="protein sequence ID" value="AAM21455.1"/>
    <property type="molecule type" value="mRNA"/>
</dbReference>
<dbReference type="EMBL" id="AF381281">
    <property type="protein sequence ID" value="AAM21456.1"/>
    <property type="molecule type" value="mRNA"/>
</dbReference>
<dbReference type="EMBL" id="AF168004">
    <property type="protein sequence ID" value="AAF34874.1"/>
    <property type="molecule type" value="mRNA"/>
</dbReference>
<dbReference type="EMBL" id="AF210434">
    <property type="protein sequence ID" value="AAG37013.1"/>
    <property type="molecule type" value="mRNA"/>
</dbReference>
<dbReference type="EMBL" id="AF257234">
    <property type="protein sequence ID" value="AAF68666.1"/>
    <property type="molecule type" value="mRNA"/>
</dbReference>
<dbReference type="EMBL" id="AB039878">
    <property type="protein sequence ID" value="BAA92431.1"/>
    <property type="molecule type" value="mRNA"/>
</dbReference>
<dbReference type="RefSeq" id="NP_064478.1">
    <property type="nucleotide sequence ID" value="NM_020093.1"/>
</dbReference>
<dbReference type="RefSeq" id="XP_063128127.1">
    <molecule id="Q9JK66-3"/>
    <property type="nucleotide sequence ID" value="XM_063272057.1"/>
</dbReference>
<dbReference type="PDB" id="2KNB">
    <property type="method" value="NMR"/>
    <property type="chains" value="A=1-76"/>
</dbReference>
<dbReference type="PDB" id="4K7D">
    <property type="method" value="X-ray"/>
    <property type="resolution" value="2.80 A"/>
    <property type="chains" value="A/B/C=141-465"/>
</dbReference>
<dbReference type="PDB" id="4K95">
    <property type="method" value="X-ray"/>
    <property type="resolution" value="6.50 A"/>
    <property type="chains" value="A/B/C/D/E/F/G/H/I/J/K/L=1-465"/>
</dbReference>
<dbReference type="PDB" id="4ZYN">
    <property type="method" value="X-ray"/>
    <property type="resolution" value="2.54 A"/>
    <property type="chains" value="A/B=1-465"/>
</dbReference>
<dbReference type="PDB" id="7US1">
    <property type="method" value="X-ray"/>
    <property type="resolution" value="2.48 A"/>
    <property type="chains" value="A=145-379"/>
</dbReference>
<dbReference type="PDB" id="8W31">
    <property type="method" value="X-ray"/>
    <property type="resolution" value="2.50 A"/>
    <property type="chains" value="A=145-379"/>
</dbReference>
<dbReference type="PDBsum" id="2KNB"/>
<dbReference type="PDBsum" id="4K7D"/>
<dbReference type="PDBsum" id="4K95"/>
<dbReference type="PDBsum" id="4ZYN"/>
<dbReference type="PDBsum" id="7US1"/>
<dbReference type="PDBsum" id="8W31"/>
<dbReference type="BMRB" id="Q9JK66"/>
<dbReference type="SMR" id="Q9JK66"/>
<dbReference type="BioGRID" id="248590">
    <property type="interactions" value="31"/>
</dbReference>
<dbReference type="DIP" id="DIP-37656N"/>
<dbReference type="FunCoup" id="Q9JK66">
    <property type="interactions" value="734"/>
</dbReference>
<dbReference type="IntAct" id="Q9JK66">
    <property type="interactions" value="1"/>
</dbReference>
<dbReference type="MINT" id="Q9JK66"/>
<dbReference type="STRING" id="10116.ENSRNOP00000075137"/>
<dbReference type="GlyGen" id="Q9JK66">
    <property type="glycosylation" value="1 site, 1 O-linked glycan (1 site)"/>
</dbReference>
<dbReference type="iPTMnet" id="Q9JK66"/>
<dbReference type="PhosphoSitePlus" id="Q9JK66"/>
<dbReference type="PaxDb" id="10116-ENSRNOP00000040511"/>
<dbReference type="Ensembl" id="ENSRNOT00000096213.1">
    <molecule id="Q9JK66-1"/>
    <property type="protein sequence ID" value="ENSRNOP00000077507.1"/>
    <property type="gene ID" value="ENSRNOG00000055547.2"/>
</dbReference>
<dbReference type="Ensembl" id="ENSRNOT00000107769.1">
    <molecule id="Q9JK66-3"/>
    <property type="protein sequence ID" value="ENSRNOP00000088932.1"/>
    <property type="gene ID" value="ENSRNOG00000055547.2"/>
</dbReference>
<dbReference type="GeneID" id="56816"/>
<dbReference type="KEGG" id="rno:56816"/>
<dbReference type="AGR" id="RGD:61797"/>
<dbReference type="CTD" id="5071"/>
<dbReference type="RGD" id="61797">
    <property type="gene designation" value="Prkn"/>
</dbReference>
<dbReference type="eggNOG" id="KOG0006">
    <property type="taxonomic scope" value="Eukaryota"/>
</dbReference>
<dbReference type="GeneTree" id="ENSGT00390000011034"/>
<dbReference type="InParanoid" id="Q9JK66"/>
<dbReference type="PhylomeDB" id="Q9JK66"/>
<dbReference type="Reactome" id="R-RNO-5205685">
    <property type="pathway name" value="PINK1-PRKN Mediated Mitophagy"/>
</dbReference>
<dbReference type="Reactome" id="R-RNO-5675482">
    <property type="pathway name" value="Regulation of necroptotic cell death"/>
</dbReference>
<dbReference type="Reactome" id="R-RNO-5689877">
    <property type="pathway name" value="Josephin domain DUBs"/>
</dbReference>
<dbReference type="Reactome" id="R-RNO-9646399">
    <property type="pathway name" value="Aggrephagy"/>
</dbReference>
<dbReference type="Reactome" id="R-RNO-983168">
    <property type="pathway name" value="Antigen processing: Ubiquitination &amp; Proteasome degradation"/>
</dbReference>
<dbReference type="UniPathway" id="UPA00143"/>
<dbReference type="EvolutionaryTrace" id="Q9JK66"/>
<dbReference type="PRO" id="PR:Q9JK66"/>
<dbReference type="Proteomes" id="UP000002494">
    <property type="component" value="Chromosome 1"/>
</dbReference>
<dbReference type="GO" id="GO:0016235">
    <property type="term" value="C:aggresome"/>
    <property type="evidence" value="ECO:0000250"/>
    <property type="project" value="ParkinsonsUK-UCL"/>
</dbReference>
<dbReference type="GO" id="GO:0030424">
    <property type="term" value="C:axon"/>
    <property type="evidence" value="ECO:0000314"/>
    <property type="project" value="RGD"/>
</dbReference>
<dbReference type="GO" id="GO:0005737">
    <property type="term" value="C:cytoplasm"/>
    <property type="evidence" value="ECO:0000314"/>
    <property type="project" value="ParkinsonsUK-UCL"/>
</dbReference>
<dbReference type="GO" id="GO:0005829">
    <property type="term" value="C:cytosol"/>
    <property type="evidence" value="ECO:0000314"/>
    <property type="project" value="ParkinsonsUK-UCL"/>
</dbReference>
<dbReference type="GO" id="GO:0098691">
    <property type="term" value="C:dopaminergic synapse"/>
    <property type="evidence" value="ECO:0000266"/>
    <property type="project" value="RGD"/>
</dbReference>
<dbReference type="GO" id="GO:0005783">
    <property type="term" value="C:endoplasmic reticulum"/>
    <property type="evidence" value="ECO:0000266"/>
    <property type="project" value="RGD"/>
</dbReference>
<dbReference type="GO" id="GO:0005789">
    <property type="term" value="C:endoplasmic reticulum membrane"/>
    <property type="evidence" value="ECO:0000314"/>
    <property type="project" value="ParkinsonsUK-UCL"/>
</dbReference>
<dbReference type="GO" id="GO:0098978">
    <property type="term" value="C:glutamatergic synapse"/>
    <property type="evidence" value="ECO:0000314"/>
    <property type="project" value="SynGO"/>
</dbReference>
<dbReference type="GO" id="GO:0005794">
    <property type="term" value="C:Golgi apparatus"/>
    <property type="evidence" value="ECO:0000266"/>
    <property type="project" value="RGD"/>
</dbReference>
<dbReference type="GO" id="GO:0000139">
    <property type="term" value="C:Golgi membrane"/>
    <property type="evidence" value="ECO:0000314"/>
    <property type="project" value="ParkinsonsUK-UCL"/>
</dbReference>
<dbReference type="GO" id="GO:0097708">
    <property type="term" value="C:intracellular vesicle"/>
    <property type="evidence" value="ECO:0000314"/>
    <property type="project" value="RGD"/>
</dbReference>
<dbReference type="GO" id="GO:0005741">
    <property type="term" value="C:mitochondrial outer membrane"/>
    <property type="evidence" value="ECO:0007669"/>
    <property type="project" value="UniProtKB-SubCell"/>
</dbReference>
<dbReference type="GO" id="GO:0005739">
    <property type="term" value="C:mitochondrion"/>
    <property type="evidence" value="ECO:0000250"/>
    <property type="project" value="UniProtKB"/>
</dbReference>
<dbReference type="GO" id="GO:0099073">
    <property type="term" value="C:mitochondrion-derived vesicle"/>
    <property type="evidence" value="ECO:0000266"/>
    <property type="project" value="RGD"/>
</dbReference>
<dbReference type="GO" id="GO:0043005">
    <property type="term" value="C:neuron projection"/>
    <property type="evidence" value="ECO:0000314"/>
    <property type="project" value="ParkinsonsUK-UCL"/>
</dbReference>
<dbReference type="GO" id="GO:0043025">
    <property type="term" value="C:neuronal cell body"/>
    <property type="evidence" value="ECO:0000314"/>
    <property type="project" value="RGD"/>
</dbReference>
<dbReference type="GO" id="GO:0016607">
    <property type="term" value="C:nuclear speck"/>
    <property type="evidence" value="ECO:0007669"/>
    <property type="project" value="Ensembl"/>
</dbReference>
<dbReference type="GO" id="GO:0005634">
    <property type="term" value="C:nucleus"/>
    <property type="evidence" value="ECO:0000266"/>
    <property type="project" value="RGD"/>
</dbReference>
<dbReference type="GO" id="GO:1990452">
    <property type="term" value="C:Parkin-FBXW7-Cul1 ubiquitin ligase complex"/>
    <property type="evidence" value="ECO:0000250"/>
    <property type="project" value="ParkinsonsUK-UCL"/>
</dbReference>
<dbReference type="GO" id="GO:0048471">
    <property type="term" value="C:perinuclear region of cytoplasm"/>
    <property type="evidence" value="ECO:0000314"/>
    <property type="project" value="ParkinsonsUK-UCL"/>
</dbReference>
<dbReference type="GO" id="GO:0098794">
    <property type="term" value="C:postsynapse"/>
    <property type="evidence" value="ECO:0000314"/>
    <property type="project" value="SynGO"/>
</dbReference>
<dbReference type="GO" id="GO:0014069">
    <property type="term" value="C:postsynaptic density"/>
    <property type="evidence" value="ECO:0007669"/>
    <property type="project" value="UniProtKB-SubCell"/>
</dbReference>
<dbReference type="GO" id="GO:0098793">
    <property type="term" value="C:presynapse"/>
    <property type="evidence" value="ECO:0000314"/>
    <property type="project" value="RGD"/>
</dbReference>
<dbReference type="GO" id="GO:0032991">
    <property type="term" value="C:protein-containing complex"/>
    <property type="evidence" value="ECO:0000266"/>
    <property type="project" value="RGD"/>
</dbReference>
<dbReference type="GO" id="GO:0045202">
    <property type="term" value="C:synapse"/>
    <property type="evidence" value="ECO:0000314"/>
    <property type="project" value="ParkinsonsUK-UCL"/>
</dbReference>
<dbReference type="GO" id="GO:0008021">
    <property type="term" value="C:synaptic vesicle"/>
    <property type="evidence" value="ECO:0000314"/>
    <property type="project" value="RGD"/>
</dbReference>
<dbReference type="GO" id="GO:0030672">
    <property type="term" value="C:synaptic vesicle membrane"/>
    <property type="evidence" value="ECO:0000314"/>
    <property type="project" value="RGD"/>
</dbReference>
<dbReference type="GO" id="GO:0043195">
    <property type="term" value="C:terminal bouton"/>
    <property type="evidence" value="ECO:0000314"/>
    <property type="project" value="ParkinsonsUK-UCL"/>
</dbReference>
<dbReference type="GO" id="GO:0000151">
    <property type="term" value="C:ubiquitin ligase complex"/>
    <property type="evidence" value="ECO:0000250"/>
    <property type="project" value="ParkinsonsUK-UCL"/>
</dbReference>
<dbReference type="GO" id="GO:0003779">
    <property type="term" value="F:actin binding"/>
    <property type="evidence" value="ECO:0000266"/>
    <property type="project" value="RGD"/>
</dbReference>
<dbReference type="GO" id="GO:0008013">
    <property type="term" value="F:beta-catenin binding"/>
    <property type="evidence" value="ECO:0000266"/>
    <property type="project" value="RGD"/>
</dbReference>
<dbReference type="GO" id="GO:0097602">
    <property type="term" value="F:cullin family protein binding"/>
    <property type="evidence" value="ECO:0000250"/>
    <property type="project" value="ParkinsonsUK-UCL"/>
</dbReference>
<dbReference type="GO" id="GO:0019899">
    <property type="term" value="F:enzyme binding"/>
    <property type="evidence" value="ECO:0000266"/>
    <property type="project" value="RGD"/>
</dbReference>
<dbReference type="GO" id="GO:1990444">
    <property type="term" value="F:F-box domain binding"/>
    <property type="evidence" value="ECO:0000250"/>
    <property type="project" value="ParkinsonsUK-UCL"/>
</dbReference>
<dbReference type="GO" id="GO:0001664">
    <property type="term" value="F:G protein-coupled receptor binding"/>
    <property type="evidence" value="ECO:0000250"/>
    <property type="project" value="ParkinsonsUK-UCL"/>
</dbReference>
<dbReference type="GO" id="GO:0031072">
    <property type="term" value="F:heat shock protein binding"/>
    <property type="evidence" value="ECO:0000266"/>
    <property type="project" value="RGD"/>
</dbReference>
<dbReference type="GO" id="GO:0042826">
    <property type="term" value="F:histone deacetylase binding"/>
    <property type="evidence" value="ECO:0000266"/>
    <property type="project" value="RGD"/>
</dbReference>
<dbReference type="GO" id="GO:0030544">
    <property type="term" value="F:Hsp70 protein binding"/>
    <property type="evidence" value="ECO:0000266"/>
    <property type="project" value="RGD"/>
</dbReference>
<dbReference type="GO" id="GO:0042802">
    <property type="term" value="F:identical protein binding"/>
    <property type="evidence" value="ECO:0000250"/>
    <property type="project" value="ParkinsonsUK-UCL"/>
</dbReference>
<dbReference type="GO" id="GO:0019900">
    <property type="term" value="F:kinase binding"/>
    <property type="evidence" value="ECO:0000266"/>
    <property type="project" value="RGD"/>
</dbReference>
<dbReference type="GO" id="GO:0030165">
    <property type="term" value="F:PDZ domain binding"/>
    <property type="evidence" value="ECO:0000250"/>
    <property type="project" value="ParkinsonsUK-UCL"/>
</dbReference>
<dbReference type="GO" id="GO:0043274">
    <property type="term" value="F:phospholipase binding"/>
    <property type="evidence" value="ECO:0000266"/>
    <property type="project" value="RGD"/>
</dbReference>
<dbReference type="GO" id="GO:0019901">
    <property type="term" value="F:protein kinase binding"/>
    <property type="evidence" value="ECO:0000353"/>
    <property type="project" value="RGD"/>
</dbReference>
<dbReference type="GO" id="GO:0044877">
    <property type="term" value="F:protein-containing complex binding"/>
    <property type="evidence" value="ECO:0000314"/>
    <property type="project" value="RGD"/>
</dbReference>
<dbReference type="GO" id="GO:0051087">
    <property type="term" value="F:protein-folding chaperone binding"/>
    <property type="evidence" value="ECO:0000266"/>
    <property type="project" value="RGD"/>
</dbReference>
<dbReference type="GO" id="GO:0003714">
    <property type="term" value="F:transcription corepressor activity"/>
    <property type="evidence" value="ECO:0000266"/>
    <property type="project" value="RGD"/>
</dbReference>
<dbReference type="GO" id="GO:0015631">
    <property type="term" value="F:tubulin binding"/>
    <property type="evidence" value="ECO:0000266"/>
    <property type="project" value="RGD"/>
</dbReference>
<dbReference type="GO" id="GO:0043130">
    <property type="term" value="F:ubiquitin binding"/>
    <property type="evidence" value="ECO:0000250"/>
    <property type="project" value="UniProtKB"/>
</dbReference>
<dbReference type="GO" id="GO:0031624">
    <property type="term" value="F:ubiquitin conjugating enzyme binding"/>
    <property type="evidence" value="ECO:0000250"/>
    <property type="project" value="ParkinsonsUK-UCL"/>
</dbReference>
<dbReference type="GO" id="GO:0061630">
    <property type="term" value="F:ubiquitin protein ligase activity"/>
    <property type="evidence" value="ECO:0000250"/>
    <property type="project" value="UniProtKB"/>
</dbReference>
<dbReference type="GO" id="GO:0031625">
    <property type="term" value="F:ubiquitin protein ligase binding"/>
    <property type="evidence" value="ECO:0000266"/>
    <property type="project" value="RGD"/>
</dbReference>
<dbReference type="GO" id="GO:0004842">
    <property type="term" value="F:ubiquitin-protein transferase activity"/>
    <property type="evidence" value="ECO:0000250"/>
    <property type="project" value="UniProtKB"/>
</dbReference>
<dbReference type="GO" id="GO:1990381">
    <property type="term" value="F:ubiquitin-specific protease binding"/>
    <property type="evidence" value="ECO:0000266"/>
    <property type="project" value="RGD"/>
</dbReference>
<dbReference type="GO" id="GO:0008270">
    <property type="term" value="F:zinc ion binding"/>
    <property type="evidence" value="ECO:0007669"/>
    <property type="project" value="UniProtKB-KW"/>
</dbReference>
<dbReference type="GO" id="GO:0008344">
    <property type="term" value="P:adult locomotory behavior"/>
    <property type="evidence" value="ECO:0000250"/>
    <property type="project" value="ParkinsonsUK-UCL"/>
</dbReference>
<dbReference type="GO" id="GO:0070842">
    <property type="term" value="P:aggresome assembly"/>
    <property type="evidence" value="ECO:0000250"/>
    <property type="project" value="ParkinsonsUK-UCL"/>
</dbReference>
<dbReference type="GO" id="GO:0000422">
    <property type="term" value="P:autophagy of mitochondrion"/>
    <property type="evidence" value="ECO:0000250"/>
    <property type="project" value="UniProtKB"/>
</dbReference>
<dbReference type="GO" id="GO:1904881">
    <property type="term" value="P:cellular response to hydrogen sulfide"/>
    <property type="evidence" value="ECO:0000314"/>
    <property type="project" value="RGD"/>
</dbReference>
<dbReference type="GO" id="GO:1905232">
    <property type="term" value="P:cellular response to L-glutamate"/>
    <property type="evidence" value="ECO:0000314"/>
    <property type="project" value="RGD"/>
</dbReference>
<dbReference type="GO" id="GO:1904845">
    <property type="term" value="P:cellular response to L-glutamine"/>
    <property type="evidence" value="ECO:0000270"/>
    <property type="project" value="RGD"/>
</dbReference>
<dbReference type="GO" id="GO:0071287">
    <property type="term" value="P:cellular response to manganese ion"/>
    <property type="evidence" value="ECO:0000270"/>
    <property type="project" value="RGD"/>
</dbReference>
<dbReference type="GO" id="GO:0034599">
    <property type="term" value="P:cellular response to oxidative stress"/>
    <property type="evidence" value="ECO:0000315"/>
    <property type="project" value="ParkinsonsUK-UCL"/>
</dbReference>
<dbReference type="GO" id="GO:0097237">
    <property type="term" value="P:cellular response to toxic substance"/>
    <property type="evidence" value="ECO:0000250"/>
    <property type="project" value="ParkinsonsUK-UCL"/>
</dbReference>
<dbReference type="GO" id="GO:0042417">
    <property type="term" value="P:dopamine metabolic process"/>
    <property type="evidence" value="ECO:0000266"/>
    <property type="project" value="RGD"/>
</dbReference>
<dbReference type="GO" id="GO:0051583">
    <property type="term" value="P:dopamine uptake involved in synaptic transmission"/>
    <property type="evidence" value="ECO:0000266"/>
    <property type="project" value="RGD"/>
</dbReference>
<dbReference type="GO" id="GO:0010994">
    <property type="term" value="P:free ubiquitin chain polymerization"/>
    <property type="evidence" value="ECO:0000266"/>
    <property type="project" value="RGD"/>
</dbReference>
<dbReference type="GO" id="GO:0007612">
    <property type="term" value="P:learning"/>
    <property type="evidence" value="ECO:0000266"/>
    <property type="project" value="RGD"/>
</dbReference>
<dbReference type="GO" id="GO:0007626">
    <property type="term" value="P:locomotory behavior"/>
    <property type="evidence" value="ECO:0000266"/>
    <property type="project" value="RGD"/>
</dbReference>
<dbReference type="GO" id="GO:0000266">
    <property type="term" value="P:mitochondrial fission"/>
    <property type="evidence" value="ECO:0000250"/>
    <property type="project" value="ParkinsonsUK-UCL"/>
</dbReference>
<dbReference type="GO" id="GO:0043653">
    <property type="term" value="P:mitochondrial fragmentation involved in apoptotic process"/>
    <property type="evidence" value="ECO:0000315"/>
    <property type="project" value="RGD"/>
</dbReference>
<dbReference type="GO" id="GO:0051646">
    <property type="term" value="P:mitochondrion localization"/>
    <property type="evidence" value="ECO:0000314"/>
    <property type="project" value="ParkinsonsUK-UCL"/>
</dbReference>
<dbReference type="GO" id="GO:0007005">
    <property type="term" value="P:mitochondrion organization"/>
    <property type="evidence" value="ECO:0000250"/>
    <property type="project" value="ParkinsonsUK-UCL"/>
</dbReference>
<dbReference type="GO" id="GO:0099074">
    <property type="term" value="P:mitochondrion to lysosome vesicle-mediated transport"/>
    <property type="evidence" value="ECO:0000266"/>
    <property type="project" value="RGD"/>
</dbReference>
<dbReference type="GO" id="GO:0000423">
    <property type="term" value="P:mitophagy"/>
    <property type="evidence" value="ECO:0000314"/>
    <property type="project" value="ParkinsonsUK-UCL"/>
</dbReference>
<dbReference type="GO" id="GO:0050804">
    <property type="term" value="P:modulation of chemical synaptic transmission"/>
    <property type="evidence" value="ECO:0000266"/>
    <property type="project" value="RGD"/>
</dbReference>
<dbReference type="GO" id="GO:0044828">
    <property type="term" value="P:negative regulation by host of viral genome replication"/>
    <property type="evidence" value="ECO:0000266"/>
    <property type="project" value="RGD"/>
</dbReference>
<dbReference type="GO" id="GO:0032232">
    <property type="term" value="P:negative regulation of actin filament bundle assembly"/>
    <property type="evidence" value="ECO:0000266"/>
    <property type="project" value="RGD"/>
</dbReference>
<dbReference type="GO" id="GO:0090090">
    <property type="term" value="P:negative regulation of canonical Wnt signaling pathway"/>
    <property type="evidence" value="ECO:0000266"/>
    <property type="project" value="RGD"/>
</dbReference>
<dbReference type="GO" id="GO:1902236">
    <property type="term" value="P:negative regulation of endoplasmic reticulum stress-induced intrinsic apoptotic signaling pathway"/>
    <property type="evidence" value="ECO:0000250"/>
    <property type="project" value="ParkinsonsUK-UCL"/>
</dbReference>
<dbReference type="GO" id="GO:1903382">
    <property type="term" value="P:negative regulation of endoplasmic reticulum stress-induced neuron intrinsic apoptotic signaling pathway"/>
    <property type="evidence" value="ECO:0000266"/>
    <property type="project" value="RGD"/>
</dbReference>
<dbReference type="GO" id="GO:0090394">
    <property type="term" value="P:negative regulation of excitatory postsynaptic potential"/>
    <property type="evidence" value="ECO:0000315"/>
    <property type="project" value="RGD"/>
</dbReference>
<dbReference type="GO" id="GO:1903542">
    <property type="term" value="P:negative regulation of exosomal secretion"/>
    <property type="evidence" value="ECO:0000266"/>
    <property type="project" value="RGD"/>
</dbReference>
<dbReference type="GO" id="GO:0010629">
    <property type="term" value="P:negative regulation of gene expression"/>
    <property type="evidence" value="ECO:0000266"/>
    <property type="project" value="RGD"/>
</dbReference>
<dbReference type="GO" id="GO:0033132">
    <property type="term" value="P:negative regulation of glucokinase activity"/>
    <property type="evidence" value="ECO:0000250"/>
    <property type="project" value="ParkinsonsUK-UCL"/>
</dbReference>
<dbReference type="GO" id="GO:0046676">
    <property type="term" value="P:negative regulation of insulin secretion"/>
    <property type="evidence" value="ECO:0000250"/>
    <property type="project" value="ParkinsonsUK-UCL"/>
</dbReference>
<dbReference type="GO" id="GO:1905366">
    <property type="term" value="P:negative regulation of intralumenal vesicle formation"/>
    <property type="evidence" value="ECO:0000266"/>
    <property type="project" value="RGD"/>
</dbReference>
<dbReference type="GO" id="GO:1902254">
    <property type="term" value="P:negative regulation of intrinsic apoptotic signaling pathway by p53 class mediator"/>
    <property type="evidence" value="ECO:0000266"/>
    <property type="project" value="RGD"/>
</dbReference>
<dbReference type="GO" id="GO:0046329">
    <property type="term" value="P:negative regulation of JNK cascade"/>
    <property type="evidence" value="ECO:0000250"/>
    <property type="project" value="ParkinsonsUK-UCL"/>
</dbReference>
<dbReference type="GO" id="GO:0090258">
    <property type="term" value="P:negative regulation of mitochondrial fission"/>
    <property type="evidence" value="ECO:0000315"/>
    <property type="project" value="RGD"/>
</dbReference>
<dbReference type="GO" id="GO:0010637">
    <property type="term" value="P:negative regulation of mitochondrial fusion"/>
    <property type="evidence" value="ECO:0000250"/>
    <property type="project" value="ParkinsonsUK-UCL"/>
</dbReference>
<dbReference type="GO" id="GO:0043524">
    <property type="term" value="P:negative regulation of neuron apoptotic process"/>
    <property type="evidence" value="ECO:0000315"/>
    <property type="project" value="RGD"/>
</dbReference>
<dbReference type="GO" id="GO:1903377">
    <property type="term" value="P:negative regulation of oxidative stress-induced neuron intrinsic apoptotic signaling pathway"/>
    <property type="evidence" value="ECO:0000316"/>
    <property type="project" value="ParkinsonsUK-UCL"/>
</dbReference>
<dbReference type="GO" id="GO:1903427">
    <property type="term" value="P:negative regulation of reactive oxygen species biosynthetic process"/>
    <property type="evidence" value="ECO:0000315"/>
    <property type="project" value="RGD"/>
</dbReference>
<dbReference type="GO" id="GO:2000378">
    <property type="term" value="P:negative regulation of reactive oxygen species metabolic process"/>
    <property type="evidence" value="ECO:0000250"/>
    <property type="project" value="ParkinsonsUK-UCL"/>
</dbReference>
<dbReference type="GO" id="GO:0090201">
    <property type="term" value="P:negative regulation of release of cytochrome c from mitochondria"/>
    <property type="evidence" value="ECO:0000250"/>
    <property type="project" value="ParkinsonsUK-UCL"/>
</dbReference>
<dbReference type="GO" id="GO:1904049">
    <property type="term" value="P:negative regulation of spontaneous neurotransmitter secretion"/>
    <property type="evidence" value="ECO:0000266"/>
    <property type="project" value="RGD"/>
</dbReference>
<dbReference type="GO" id="GO:0051967">
    <property type="term" value="P:negative regulation of synaptic transmission, glutamatergic"/>
    <property type="evidence" value="ECO:0000315"/>
    <property type="project" value="RGD"/>
</dbReference>
<dbReference type="GO" id="GO:0000122">
    <property type="term" value="P:negative regulation of transcription by RNA polymerase II"/>
    <property type="evidence" value="ECO:0000266"/>
    <property type="project" value="RGD"/>
</dbReference>
<dbReference type="GO" id="GO:0070050">
    <property type="term" value="P:neuron cellular homeostasis"/>
    <property type="evidence" value="ECO:0000250"/>
    <property type="project" value="ParkinsonsUK-UCL"/>
</dbReference>
<dbReference type="GO" id="GO:0042415">
    <property type="term" value="P:norepinephrine metabolic process"/>
    <property type="evidence" value="ECO:0000266"/>
    <property type="project" value="RGD"/>
</dbReference>
<dbReference type="GO" id="GO:0043065">
    <property type="term" value="P:positive regulation of apoptotic process"/>
    <property type="evidence" value="ECO:0000315"/>
    <property type="project" value="RGD"/>
</dbReference>
<dbReference type="GO" id="GO:2001171">
    <property type="term" value="P:positive regulation of ATP biosynthetic process"/>
    <property type="evidence" value="ECO:0000315"/>
    <property type="project" value="RGD"/>
</dbReference>
<dbReference type="GO" id="GO:0043123">
    <property type="term" value="P:positive regulation of canonical NF-kappaB signal transduction"/>
    <property type="evidence" value="ECO:0000250"/>
    <property type="project" value="ParkinsonsUK-UCL"/>
</dbReference>
<dbReference type="GO" id="GO:1903861">
    <property type="term" value="P:positive regulation of dendrite extension"/>
    <property type="evidence" value="ECO:0000266"/>
    <property type="project" value="RGD"/>
</dbReference>
<dbReference type="GO" id="GO:0010628">
    <property type="term" value="P:positive regulation of gene expression"/>
    <property type="evidence" value="ECO:0000266"/>
    <property type="project" value="RGD"/>
</dbReference>
<dbReference type="GO" id="GO:0035774">
    <property type="term" value="P:positive regulation of insulin secretion involved in cellular response to glucose stimulus"/>
    <property type="evidence" value="ECO:0000315"/>
    <property type="project" value="RGD"/>
</dbReference>
<dbReference type="GO" id="GO:0090141">
    <property type="term" value="P:positive regulation of mitochondrial fission"/>
    <property type="evidence" value="ECO:0000250"/>
    <property type="project" value="ParkinsonsUK-UCL"/>
</dbReference>
<dbReference type="GO" id="GO:0010636">
    <property type="term" value="P:positive regulation of mitochondrial fusion"/>
    <property type="evidence" value="ECO:0000250"/>
    <property type="project" value="ParkinsonsUK-UCL"/>
</dbReference>
<dbReference type="GO" id="GO:0010918">
    <property type="term" value="P:positive regulation of mitochondrial membrane potential"/>
    <property type="evidence" value="ECO:0000315"/>
    <property type="project" value="RGD"/>
</dbReference>
<dbReference type="GO" id="GO:1901526">
    <property type="term" value="P:positive regulation of mitophagy"/>
    <property type="evidence" value="ECO:0000315"/>
    <property type="project" value="RGD"/>
</dbReference>
<dbReference type="GO" id="GO:0051582">
    <property type="term" value="P:positive regulation of neurotransmitter uptake"/>
    <property type="evidence" value="ECO:0000266"/>
    <property type="project" value="RGD"/>
</dbReference>
<dbReference type="GO" id="GO:1901800">
    <property type="term" value="P:positive regulation of proteasomal protein catabolic process"/>
    <property type="evidence" value="ECO:0000266"/>
    <property type="project" value="RGD"/>
</dbReference>
<dbReference type="GO" id="GO:0032436">
    <property type="term" value="P:positive regulation of proteasomal ubiquitin-dependent protein catabolic process"/>
    <property type="evidence" value="ECO:0007669"/>
    <property type="project" value="Ensembl"/>
</dbReference>
<dbReference type="GO" id="GO:1902530">
    <property type="term" value="P:positive regulation of protein linear polyubiquitination"/>
    <property type="evidence" value="ECO:0000266"/>
    <property type="project" value="RGD"/>
</dbReference>
<dbReference type="GO" id="GO:1905477">
    <property type="term" value="P:positive regulation of protein localization to membrane"/>
    <property type="evidence" value="ECO:0000266"/>
    <property type="project" value="RGD"/>
</dbReference>
<dbReference type="GO" id="GO:0045944">
    <property type="term" value="P:positive regulation of transcription by RNA polymerase II"/>
    <property type="evidence" value="ECO:0000250"/>
    <property type="project" value="ParkinsonsUK-UCL"/>
</dbReference>
<dbReference type="GO" id="GO:1903265">
    <property type="term" value="P:positive regulation of tumor necrosis factor-mediated signaling pathway"/>
    <property type="evidence" value="ECO:0000250"/>
    <property type="project" value="ParkinsonsUK-UCL"/>
</dbReference>
<dbReference type="GO" id="GO:1905091">
    <property type="term" value="P:positive regulation of type 2 mitophagy"/>
    <property type="evidence" value="ECO:0000266"/>
    <property type="project" value="RGD"/>
</dbReference>
<dbReference type="GO" id="GO:0010498">
    <property type="term" value="P:proteasomal protein catabolic process"/>
    <property type="evidence" value="ECO:0000266"/>
    <property type="project" value="RGD"/>
</dbReference>
<dbReference type="GO" id="GO:0043161">
    <property type="term" value="P:proteasome-mediated ubiquitin-dependent protein catabolic process"/>
    <property type="evidence" value="ECO:0000250"/>
    <property type="project" value="ParkinsonsUK-UCL"/>
</dbReference>
<dbReference type="GO" id="GO:0051865">
    <property type="term" value="P:protein autoubiquitination"/>
    <property type="evidence" value="ECO:0000250"/>
    <property type="project" value="ParkinsonsUK-UCL"/>
</dbReference>
<dbReference type="GO" id="GO:0030163">
    <property type="term" value="P:protein catabolic process"/>
    <property type="evidence" value="ECO:0000266"/>
    <property type="project" value="RGD"/>
</dbReference>
<dbReference type="GO" id="GO:0031648">
    <property type="term" value="P:protein destabilization"/>
    <property type="evidence" value="ECO:0000250"/>
    <property type="project" value="UniProtKB"/>
</dbReference>
<dbReference type="GO" id="GO:0070979">
    <property type="term" value="P:protein K11-linked ubiquitination"/>
    <property type="evidence" value="ECO:0000250"/>
    <property type="project" value="UniProtKB"/>
</dbReference>
<dbReference type="GO" id="GO:0070936">
    <property type="term" value="P:protein K48-linked ubiquitination"/>
    <property type="evidence" value="ECO:0000266"/>
    <property type="project" value="RGD"/>
</dbReference>
<dbReference type="GO" id="GO:0085020">
    <property type="term" value="P:protein K6-linked ubiquitination"/>
    <property type="evidence" value="ECO:0000250"/>
    <property type="project" value="UniProtKB"/>
</dbReference>
<dbReference type="GO" id="GO:0070534">
    <property type="term" value="P:protein K63-linked ubiquitination"/>
    <property type="evidence" value="ECO:0000250"/>
    <property type="project" value="ParkinsonsUK-UCL"/>
</dbReference>
<dbReference type="GO" id="GO:0070585">
    <property type="term" value="P:protein localization to mitochondrion"/>
    <property type="evidence" value="ECO:0000314"/>
    <property type="project" value="ParkinsonsUK-UCL"/>
</dbReference>
<dbReference type="GO" id="GO:0006513">
    <property type="term" value="P:protein monoubiquitination"/>
    <property type="evidence" value="ECO:0000250"/>
    <property type="project" value="UniProtKB"/>
</dbReference>
<dbReference type="GO" id="GO:0000209">
    <property type="term" value="P:protein polyubiquitination"/>
    <property type="evidence" value="ECO:0000250"/>
    <property type="project" value="ParkinsonsUK-UCL"/>
</dbReference>
<dbReference type="GO" id="GO:0050821">
    <property type="term" value="P:protein stabilization"/>
    <property type="evidence" value="ECO:0000266"/>
    <property type="project" value="RGD"/>
</dbReference>
<dbReference type="GO" id="GO:0016567">
    <property type="term" value="P:protein ubiquitination"/>
    <property type="evidence" value="ECO:0000314"/>
    <property type="project" value="ParkinsonsUK-UCL"/>
</dbReference>
<dbReference type="GO" id="GO:0042981">
    <property type="term" value="P:regulation of apoptotic process"/>
    <property type="evidence" value="ECO:0000318"/>
    <property type="project" value="GO_Central"/>
</dbReference>
<dbReference type="GO" id="GO:0010506">
    <property type="term" value="P:regulation of autophagy"/>
    <property type="evidence" value="ECO:0000250"/>
    <property type="project" value="UniProtKB"/>
</dbReference>
<dbReference type="GO" id="GO:1900407">
    <property type="term" value="P:regulation of cellular response to oxidative stress"/>
    <property type="evidence" value="ECO:0000250"/>
    <property type="project" value="ParkinsonsUK-UCL"/>
</dbReference>
<dbReference type="GO" id="GO:0042053">
    <property type="term" value="P:regulation of dopamine metabolic process"/>
    <property type="evidence" value="ECO:0000266"/>
    <property type="project" value="RGD"/>
</dbReference>
<dbReference type="GO" id="GO:0051881">
    <property type="term" value="P:regulation of mitochondrial membrane potential"/>
    <property type="evidence" value="ECO:0000266"/>
    <property type="project" value="RGD"/>
</dbReference>
<dbReference type="GO" id="GO:0010821">
    <property type="term" value="P:regulation of mitochondrion organization"/>
    <property type="evidence" value="ECO:0000250"/>
    <property type="project" value="ParkinsonsUK-UCL"/>
</dbReference>
<dbReference type="GO" id="GO:0046928">
    <property type="term" value="P:regulation of neurotransmitter secretion"/>
    <property type="evidence" value="ECO:0000266"/>
    <property type="project" value="RGD"/>
</dbReference>
<dbReference type="GO" id="GO:0099072">
    <property type="term" value="P:regulation of postsynaptic membrane neurotransmitter receptor levels"/>
    <property type="evidence" value="ECO:0000314"/>
    <property type="project" value="SynGO"/>
</dbReference>
<dbReference type="GO" id="GO:0031647">
    <property type="term" value="P:regulation of protein stability"/>
    <property type="evidence" value="ECO:0000266"/>
    <property type="project" value="RGD"/>
</dbReference>
<dbReference type="GO" id="GO:0031396">
    <property type="term" value="P:regulation of protein ubiquitination"/>
    <property type="evidence" value="ECO:0000266"/>
    <property type="project" value="RGD"/>
</dbReference>
<dbReference type="GO" id="GO:2000377">
    <property type="term" value="P:regulation of reactive oxygen species metabolic process"/>
    <property type="evidence" value="ECO:0000266"/>
    <property type="project" value="RGD"/>
</dbReference>
<dbReference type="GO" id="GO:1900242">
    <property type="term" value="P:regulation of synaptic vesicle endocytosis"/>
    <property type="evidence" value="ECO:0000266"/>
    <property type="project" value="RGD"/>
</dbReference>
<dbReference type="GO" id="GO:0140251">
    <property type="term" value="P:regulation protein catabolic process at presynapse"/>
    <property type="evidence" value="ECO:0000266"/>
    <property type="project" value="RGD"/>
</dbReference>
<dbReference type="GO" id="GO:0051412">
    <property type="term" value="P:response to corticosterone"/>
    <property type="evidence" value="ECO:0000270"/>
    <property type="project" value="RGD"/>
</dbReference>
<dbReference type="GO" id="GO:1904643">
    <property type="term" value="P:response to curcumin"/>
    <property type="evidence" value="ECO:0000270"/>
    <property type="project" value="RGD"/>
</dbReference>
<dbReference type="GO" id="GO:0034976">
    <property type="term" value="P:response to endoplasmic reticulum stress"/>
    <property type="evidence" value="ECO:0000270"/>
    <property type="project" value="RGD"/>
</dbReference>
<dbReference type="GO" id="GO:0014850">
    <property type="term" value="P:response to muscle activity"/>
    <property type="evidence" value="ECO:0000270"/>
    <property type="project" value="RGD"/>
</dbReference>
<dbReference type="GO" id="GO:0006979">
    <property type="term" value="P:response to oxidative stress"/>
    <property type="evidence" value="ECO:0000250"/>
    <property type="project" value="ParkinsonsUK-UCL"/>
</dbReference>
<dbReference type="GO" id="GO:0006986">
    <property type="term" value="P:response to unfolded protein"/>
    <property type="evidence" value="ECO:0000270"/>
    <property type="project" value="RGD"/>
</dbReference>
<dbReference type="GO" id="GO:0009410">
    <property type="term" value="P:response to xenobiotic stimulus"/>
    <property type="evidence" value="ECO:0000270"/>
    <property type="project" value="RGD"/>
</dbReference>
<dbReference type="GO" id="GO:0001964">
    <property type="term" value="P:startle response"/>
    <property type="evidence" value="ECO:0000266"/>
    <property type="project" value="RGD"/>
</dbReference>
<dbReference type="GO" id="GO:0001963">
    <property type="term" value="P:synaptic transmission, dopaminergic"/>
    <property type="evidence" value="ECO:0000266"/>
    <property type="project" value="RGD"/>
</dbReference>
<dbReference type="GO" id="GO:0035249">
    <property type="term" value="P:synaptic transmission, glutamatergic"/>
    <property type="evidence" value="ECO:0000266"/>
    <property type="project" value="RGD"/>
</dbReference>
<dbReference type="GO" id="GO:0061734">
    <property type="term" value="P:type 2 mitophagy"/>
    <property type="evidence" value="ECO:0000266"/>
    <property type="project" value="RGD"/>
</dbReference>
<dbReference type="GO" id="GO:0006511">
    <property type="term" value="P:ubiquitin-dependent protein catabolic process"/>
    <property type="evidence" value="ECO:0000250"/>
    <property type="project" value="ParkinsonsUK-UCL"/>
</dbReference>
<dbReference type="CDD" id="cd20340">
    <property type="entry name" value="BRcat_RBR_parkin"/>
    <property type="match status" value="1"/>
</dbReference>
<dbReference type="CDD" id="cd20357">
    <property type="entry name" value="Rcat_RBR_parkin"/>
    <property type="match status" value="1"/>
</dbReference>
<dbReference type="CDD" id="cd16627">
    <property type="entry name" value="RING-HC_RBR_parkin"/>
    <property type="match status" value="1"/>
</dbReference>
<dbReference type="CDD" id="cd21382">
    <property type="entry name" value="RING0_parkin"/>
    <property type="match status" value="1"/>
</dbReference>
<dbReference type="CDD" id="cd01798">
    <property type="entry name" value="Ubl_parkin"/>
    <property type="match status" value="1"/>
</dbReference>
<dbReference type="DisProt" id="DP01850"/>
<dbReference type="FunFam" id="1.20.120.1750:FF:000009">
    <property type="entry name" value="E3 ubiquitin-protein ligase parkin"/>
    <property type="match status" value="1"/>
</dbReference>
<dbReference type="FunFam" id="2.20.25.20:FF:000008">
    <property type="entry name" value="E3 ubiquitin-protein ligase parkin"/>
    <property type="match status" value="1"/>
</dbReference>
<dbReference type="FunFam" id="3.10.20.90:FF:000142">
    <property type="entry name" value="E3 ubiquitin-protein ligase parkin"/>
    <property type="match status" value="1"/>
</dbReference>
<dbReference type="Gene3D" id="1.20.120.1750">
    <property type="match status" value="1"/>
</dbReference>
<dbReference type="Gene3D" id="2.20.25.20">
    <property type="match status" value="1"/>
</dbReference>
<dbReference type="Gene3D" id="3.10.20.90">
    <property type="entry name" value="Phosphatidylinositol 3-kinase Catalytic Subunit, Chain A, domain 1"/>
    <property type="match status" value="1"/>
</dbReference>
<dbReference type="InterPro" id="IPR047534">
    <property type="entry name" value="BRcat_RBR_parkin"/>
</dbReference>
<dbReference type="InterPro" id="IPR002867">
    <property type="entry name" value="IBR_dom"/>
</dbReference>
<dbReference type="InterPro" id="IPR003977">
    <property type="entry name" value="Parkin"/>
</dbReference>
<dbReference type="InterPro" id="IPR054694">
    <property type="entry name" value="Parkin-like_IBR"/>
</dbReference>
<dbReference type="InterPro" id="IPR041565">
    <property type="entry name" value="Parkin_Znf-RING"/>
</dbReference>
<dbReference type="InterPro" id="IPR047536">
    <property type="entry name" value="Rcat_RBR_parkin"/>
</dbReference>
<dbReference type="InterPro" id="IPR047535">
    <property type="entry name" value="RING-HC_RBR_parkin"/>
</dbReference>
<dbReference type="InterPro" id="IPR044066">
    <property type="entry name" value="TRIAD_supradom"/>
</dbReference>
<dbReference type="InterPro" id="IPR015496">
    <property type="entry name" value="Ubiquilin"/>
</dbReference>
<dbReference type="InterPro" id="IPR000626">
    <property type="entry name" value="Ubiquitin-like_dom"/>
</dbReference>
<dbReference type="InterPro" id="IPR029071">
    <property type="entry name" value="Ubiquitin-like_domsf"/>
</dbReference>
<dbReference type="InterPro" id="IPR041170">
    <property type="entry name" value="Znf-RING_14"/>
</dbReference>
<dbReference type="PANTHER" id="PTHR10677">
    <property type="entry name" value="UBIQUILIN"/>
    <property type="match status" value="1"/>
</dbReference>
<dbReference type="PANTHER" id="PTHR10677:SF40">
    <property type="entry name" value="UBIQUITIN-LIKE DOMAIN-CONTAINING PROTEIN"/>
    <property type="match status" value="1"/>
</dbReference>
<dbReference type="Pfam" id="PF22605">
    <property type="entry name" value="IBR_2"/>
    <property type="match status" value="1"/>
</dbReference>
<dbReference type="Pfam" id="PF00240">
    <property type="entry name" value="ubiquitin"/>
    <property type="match status" value="1"/>
</dbReference>
<dbReference type="Pfam" id="PF17976">
    <property type="entry name" value="zf-RING_12"/>
    <property type="match status" value="1"/>
</dbReference>
<dbReference type="Pfam" id="PF17978">
    <property type="entry name" value="zf-RING_14"/>
    <property type="match status" value="1"/>
</dbReference>
<dbReference type="PIRSF" id="PIRSF037880">
    <property type="entry name" value="Parkin"/>
    <property type="match status" value="1"/>
</dbReference>
<dbReference type="PRINTS" id="PR01475">
    <property type="entry name" value="PARKIN"/>
</dbReference>
<dbReference type="SMART" id="SM00647">
    <property type="entry name" value="IBR"/>
    <property type="match status" value="2"/>
</dbReference>
<dbReference type="SMART" id="SM00213">
    <property type="entry name" value="UBQ"/>
    <property type="match status" value="1"/>
</dbReference>
<dbReference type="SUPFAM" id="SSF57850">
    <property type="entry name" value="RING/U-box"/>
    <property type="match status" value="2"/>
</dbReference>
<dbReference type="SUPFAM" id="SSF54236">
    <property type="entry name" value="Ubiquitin-like"/>
    <property type="match status" value="1"/>
</dbReference>
<dbReference type="PROSITE" id="PS51873">
    <property type="entry name" value="TRIAD"/>
    <property type="match status" value="1"/>
</dbReference>
<dbReference type="PROSITE" id="PS50053">
    <property type="entry name" value="UBIQUITIN_2"/>
    <property type="match status" value="1"/>
</dbReference>
<feature type="chain" id="PRO_0000058578" description="E3 ubiquitin-protein ligase parkin">
    <location>
        <begin position="1"/>
        <end position="465"/>
    </location>
</feature>
<feature type="domain" description="Ubiquitin-like" evidence="3">
    <location>
        <begin position="1"/>
        <end position="76"/>
    </location>
</feature>
<feature type="zinc finger region" description="RING-type 0; atypical">
    <location>
        <begin position="141"/>
        <end position="225"/>
    </location>
</feature>
<feature type="zinc finger region" description="RING-type 1" evidence="4">
    <location>
        <begin position="238"/>
        <end position="293"/>
    </location>
</feature>
<feature type="zinc finger region" description="IBR-type" evidence="4">
    <location>
        <begin position="313"/>
        <end position="377"/>
    </location>
</feature>
<feature type="zinc finger region" description="RING-type 2; atypical" evidence="4">
    <location>
        <begin position="418"/>
        <end position="449"/>
    </location>
</feature>
<feature type="region of interest" description="Disordered" evidence="5">
    <location>
        <begin position="71"/>
        <end position="96"/>
    </location>
</feature>
<feature type="region of interest" description="Necessary for PINK1-dependent localization to mitochondria" evidence="1">
    <location>
        <begin position="77"/>
        <end position="237"/>
    </location>
</feature>
<feature type="region of interest" description="SYT11 binding 1" evidence="1">
    <location>
        <begin position="204"/>
        <end position="238"/>
    </location>
</feature>
<feature type="region of interest" description="TRIAD supradomain" evidence="4">
    <location>
        <begin position="234"/>
        <end position="465"/>
    </location>
</feature>
<feature type="region of interest" description="SYT11 binding 2" evidence="1">
    <location>
        <begin position="257"/>
        <end position="293"/>
    </location>
</feature>
<feature type="region of interest" description="REP" evidence="8">
    <location>
        <begin position="378"/>
        <end position="410"/>
    </location>
</feature>
<feature type="compositionally biased region" description="Polar residues" evidence="5">
    <location>
        <begin position="80"/>
        <end position="93"/>
    </location>
</feature>
<feature type="active site" evidence="4 8">
    <location>
        <position position="431"/>
    </location>
</feature>
<feature type="binding site" evidence="4">
    <location>
        <position position="238"/>
    </location>
    <ligand>
        <name>Zn(2+)</name>
        <dbReference type="ChEBI" id="CHEBI:29105"/>
        <label>1</label>
    </ligand>
</feature>
<feature type="binding site" evidence="4">
    <location>
        <position position="241"/>
    </location>
    <ligand>
        <name>Zn(2+)</name>
        <dbReference type="ChEBI" id="CHEBI:29105"/>
        <label>1</label>
    </ligand>
</feature>
<feature type="binding site" evidence="4">
    <location>
        <position position="253"/>
    </location>
    <ligand>
        <name>Zn(2+)</name>
        <dbReference type="ChEBI" id="CHEBI:29105"/>
        <label>2</label>
    </ligand>
</feature>
<feature type="binding site" evidence="4">
    <location>
        <position position="257"/>
    </location>
    <ligand>
        <name>Zn(2+)</name>
        <dbReference type="ChEBI" id="CHEBI:29105"/>
        <label>2</label>
    </ligand>
</feature>
<feature type="binding site" evidence="4">
    <location>
        <position position="260"/>
    </location>
    <ligand>
        <name>Zn(2+)</name>
        <dbReference type="ChEBI" id="CHEBI:29105"/>
        <label>1</label>
    </ligand>
</feature>
<feature type="binding site" evidence="4">
    <location>
        <position position="263"/>
    </location>
    <ligand>
        <name>Zn(2+)</name>
        <dbReference type="ChEBI" id="CHEBI:29105"/>
        <label>1</label>
    </ligand>
</feature>
<feature type="binding site" evidence="4">
    <location>
        <position position="289"/>
    </location>
    <ligand>
        <name>Zn(2+)</name>
        <dbReference type="ChEBI" id="CHEBI:29105"/>
        <label>2</label>
    </ligand>
</feature>
<feature type="binding site" evidence="4">
    <location>
        <position position="293"/>
    </location>
    <ligand>
        <name>Zn(2+)</name>
        <dbReference type="ChEBI" id="CHEBI:29105"/>
        <label>2</label>
    </ligand>
</feature>
<feature type="binding site" evidence="4">
    <location>
        <position position="332"/>
    </location>
    <ligand>
        <name>Zn(2+)</name>
        <dbReference type="ChEBI" id="CHEBI:29105"/>
        <label>3</label>
    </ligand>
</feature>
<feature type="binding site" evidence="4">
    <location>
        <position position="337"/>
    </location>
    <ligand>
        <name>Zn(2+)</name>
        <dbReference type="ChEBI" id="CHEBI:29105"/>
        <label>3</label>
    </ligand>
</feature>
<feature type="binding site" evidence="4">
    <location>
        <position position="352"/>
    </location>
    <ligand>
        <name>Zn(2+)</name>
        <dbReference type="ChEBI" id="CHEBI:29105"/>
        <label>3</label>
    </ligand>
</feature>
<feature type="binding site" evidence="4">
    <location>
        <position position="360"/>
    </location>
    <ligand>
        <name>Zn(2+)</name>
        <dbReference type="ChEBI" id="CHEBI:29105"/>
        <label>3</label>
    </ligand>
</feature>
<feature type="binding site" evidence="4">
    <location>
        <position position="365"/>
    </location>
    <ligand>
        <name>Zn(2+)</name>
        <dbReference type="ChEBI" id="CHEBI:29105"/>
        <label>4</label>
    </ligand>
</feature>
<feature type="binding site" evidence="4">
    <location>
        <position position="368"/>
    </location>
    <ligand>
        <name>Zn(2+)</name>
        <dbReference type="ChEBI" id="CHEBI:29105"/>
        <label>4</label>
    </ligand>
</feature>
<feature type="binding site" evidence="4">
    <location>
        <position position="373"/>
    </location>
    <ligand>
        <name>Zn(2+)</name>
        <dbReference type="ChEBI" id="CHEBI:29105"/>
        <label>4</label>
    </ligand>
</feature>
<feature type="binding site" evidence="4">
    <location>
        <position position="377"/>
    </location>
    <ligand>
        <name>Zn(2+)</name>
        <dbReference type="ChEBI" id="CHEBI:29105"/>
        <label>4</label>
    </ligand>
</feature>
<feature type="binding site" evidence="4">
    <location>
        <position position="418"/>
    </location>
    <ligand>
        <name>Zn(2+)</name>
        <dbReference type="ChEBI" id="CHEBI:29105"/>
        <label>5</label>
    </ligand>
</feature>
<feature type="binding site" evidence="4">
    <location>
        <position position="421"/>
    </location>
    <ligand>
        <name>Zn(2+)</name>
        <dbReference type="ChEBI" id="CHEBI:29105"/>
        <label>5</label>
    </ligand>
</feature>
<feature type="binding site" evidence="4">
    <location>
        <position position="436"/>
    </location>
    <ligand>
        <name>Zn(2+)</name>
        <dbReference type="ChEBI" id="CHEBI:29105"/>
        <label>5</label>
    </ligand>
</feature>
<feature type="binding site" evidence="4">
    <location>
        <position position="441"/>
    </location>
    <ligand>
        <name>Zn(2+)</name>
        <dbReference type="ChEBI" id="CHEBI:29105"/>
        <label>5</label>
    </ligand>
</feature>
<feature type="binding site" evidence="4">
    <location>
        <position position="446"/>
    </location>
    <ligand>
        <name>Zn(2+)</name>
        <dbReference type="ChEBI" id="CHEBI:29105"/>
        <label>6</label>
    </ligand>
</feature>
<feature type="binding site" evidence="4">
    <location>
        <position position="449"/>
    </location>
    <ligand>
        <name>Zn(2+)</name>
        <dbReference type="ChEBI" id="CHEBI:29105"/>
        <label>6</label>
    </ligand>
</feature>
<feature type="binding site" evidence="4">
    <location>
        <position position="457"/>
    </location>
    <ligand>
        <name>Zn(2+)</name>
        <dbReference type="ChEBI" id="CHEBI:29105"/>
        <label>6</label>
    </ligand>
</feature>
<feature type="binding site" evidence="4">
    <location>
        <position position="461"/>
    </location>
    <ligand>
        <name>Zn(2+)</name>
        <dbReference type="ChEBI" id="CHEBI:29105"/>
        <label>6</label>
    </ligand>
</feature>
<feature type="modified residue" description="Phosphoserine; by PINK1" evidence="1">
    <location>
        <position position="65"/>
    </location>
</feature>
<feature type="modified residue" description="Phosphothreonine" evidence="2">
    <location>
        <position position="80"/>
    </location>
</feature>
<feature type="modified residue" description="Phosphothreonine; by PINK1" evidence="1">
    <location>
        <position position="175"/>
    </location>
</feature>
<feature type="modified residue" description="Phosphothreonine" evidence="1">
    <location>
        <position position="217"/>
    </location>
</feature>
<feature type="cross-link" description="Glycyl lysine isopeptide (Lys-Gly) (interchain with G-Cter in ISG15)" evidence="1">
    <location>
        <position position="349"/>
    </location>
</feature>
<feature type="cross-link" description="Glycyl lysine isopeptide (Lys-Gly) (interchain with G-Cter in ISG15)" evidence="1">
    <location>
        <position position="369"/>
    </location>
</feature>
<feature type="splice variant" id="VSP_011717" description="In isoform 3 and isoform 6." evidence="9">
    <location>
        <begin position="1"/>
        <end position="191"/>
    </location>
</feature>
<feature type="splice variant" id="VSP_011718" description="In isoform 4." evidence="9">
    <original>Q</original>
    <variation>QHPQDGFCHKSHLAVHNLSQQDVTQ</variation>
    <location>
        <position position="57"/>
    </location>
</feature>
<feature type="splice variant" id="VSP_011719" description="In isoform 5." evidence="9">
    <location>
        <begin position="179"/>
        <end position="206"/>
    </location>
</feature>
<feature type="splice variant" id="VSP_011720" description="In isoform 6." evidence="9">
    <original>AYRVD</original>
    <variation>EDVCT</variation>
    <location>
        <begin position="390"/>
        <end position="394"/>
    </location>
</feature>
<feature type="splice variant" id="VSP_011721" description="In isoform 6." evidence="9">
    <location>
        <begin position="395"/>
        <end position="465"/>
    </location>
</feature>
<feature type="splice variant" id="VSP_011722" description="In isoform 2." evidence="9">
    <original>GGCMHMKCPQPQCKLEWC</original>
    <variation>ERMHVQYTMCIPGAHGGY</variation>
    <location>
        <begin position="429"/>
        <end position="446"/>
    </location>
</feature>
<feature type="splice variant" id="VSP_011723" description="In isoform 2." evidence="9">
    <location>
        <begin position="447"/>
        <end position="465"/>
    </location>
</feature>
<feature type="mutagenesis site" description="Increased autoubiquitination." evidence="8">
    <original>W</original>
    <variation>A</variation>
    <location>
        <position position="403"/>
    </location>
</feature>
<feature type="sequence conflict" description="In Ref. 1; AAF34874." evidence="10" ref="1">
    <original>F</original>
    <variation>C</variation>
    <location>
        <position position="24"/>
    </location>
</feature>
<feature type="sequence conflict" description="In Ref. 3; BAA92431." evidence="10" ref="3">
    <original>E</original>
    <variation>A</variation>
    <location>
        <position position="138"/>
    </location>
</feature>
<feature type="sequence conflict" description="In Ref. 3; BAA92431." evidence="10" ref="3">
    <original>K</original>
    <variation>R</variation>
    <location>
        <position position="348"/>
    </location>
</feature>
<feature type="strand" evidence="13">
    <location>
        <begin position="2"/>
        <end position="11"/>
    </location>
</feature>
<feature type="strand" evidence="13">
    <location>
        <begin position="13"/>
        <end position="16"/>
    </location>
</feature>
<feature type="helix" evidence="13">
    <location>
        <begin position="23"/>
        <end position="34"/>
    </location>
</feature>
<feature type="helix" evidence="13">
    <location>
        <begin position="38"/>
        <end position="40"/>
    </location>
</feature>
<feature type="strand" evidence="13">
    <location>
        <begin position="41"/>
        <end position="45"/>
    </location>
</feature>
<feature type="strand" evidence="13">
    <location>
        <begin position="48"/>
        <end position="50"/>
    </location>
</feature>
<feature type="helix" evidence="13">
    <location>
        <begin position="56"/>
        <end position="59"/>
    </location>
</feature>
<feature type="strand" evidence="13">
    <location>
        <begin position="65"/>
        <end position="71"/>
    </location>
</feature>
<feature type="strand" evidence="14">
    <location>
        <begin position="147"/>
        <end position="150"/>
    </location>
</feature>
<feature type="turn" evidence="14">
    <location>
        <begin position="151"/>
        <end position="154"/>
    </location>
</feature>
<feature type="strand" evidence="14">
    <location>
        <begin position="156"/>
        <end position="166"/>
    </location>
</feature>
<feature type="turn" evidence="14">
    <location>
        <begin position="167"/>
        <end position="169"/>
    </location>
</feature>
<feature type="strand" evidence="12">
    <location>
        <begin position="174"/>
        <end position="178"/>
    </location>
</feature>
<feature type="helix" evidence="14">
    <location>
        <begin position="183"/>
        <end position="187"/>
    </location>
</feature>
<feature type="strand" evidence="12">
    <location>
        <begin position="193"/>
        <end position="196"/>
    </location>
</feature>
<feature type="strand" evidence="14">
    <location>
        <begin position="205"/>
        <end position="215"/>
    </location>
</feature>
<feature type="strand" evidence="13">
    <location>
        <begin position="223"/>
        <end position="225"/>
    </location>
</feature>
<feature type="turn" evidence="14">
    <location>
        <begin position="239"/>
        <end position="241"/>
    </location>
</feature>
<feature type="strand" evidence="14">
    <location>
        <begin position="246"/>
        <end position="250"/>
    </location>
</feature>
<feature type="strand" evidence="12">
    <location>
        <begin position="253"/>
        <end position="255"/>
    </location>
</feature>
<feature type="strand" evidence="14">
    <location>
        <begin position="258"/>
        <end position="260"/>
    </location>
</feature>
<feature type="helix" evidence="14">
    <location>
        <begin position="261"/>
        <end position="273"/>
    </location>
</feature>
<feature type="strand" evidence="14">
    <location>
        <begin position="278"/>
        <end position="280"/>
    </location>
</feature>
<feature type="turn" evidence="14">
    <location>
        <begin position="281"/>
        <end position="283"/>
    </location>
</feature>
<feature type="strand" evidence="14">
    <location>
        <begin position="284"/>
        <end position="286"/>
    </location>
</feature>
<feature type="helix" evidence="14">
    <location>
        <begin position="301"/>
        <end position="307"/>
    </location>
</feature>
<feature type="helix" evidence="14">
    <location>
        <begin position="309"/>
        <end position="326"/>
    </location>
</feature>
<feature type="turn" evidence="14">
    <location>
        <begin position="335"/>
        <end position="337"/>
    </location>
</feature>
<feature type="strand" evidence="14">
    <location>
        <begin position="349"/>
        <end position="351"/>
    </location>
</feature>
<feature type="turn" evidence="14">
    <location>
        <begin position="356"/>
        <end position="358"/>
    </location>
</feature>
<feature type="strand" evidence="14">
    <location>
        <begin position="363"/>
        <end position="365"/>
    </location>
</feature>
<feature type="turn" evidence="14">
    <location>
        <begin position="366"/>
        <end position="368"/>
    </location>
</feature>
<feature type="helix" evidence="13">
    <location>
        <begin position="395"/>
        <end position="400"/>
    </location>
</feature>
<feature type="strand" evidence="12">
    <location>
        <begin position="401"/>
        <end position="403"/>
    </location>
</feature>
<feature type="strand" evidence="13">
    <location>
        <begin position="415"/>
        <end position="417"/>
    </location>
</feature>
<feature type="turn" evidence="13">
    <location>
        <begin position="419"/>
        <end position="421"/>
    </location>
</feature>
<feature type="strand" evidence="13">
    <location>
        <begin position="424"/>
        <end position="426"/>
    </location>
</feature>
<feature type="strand" evidence="12">
    <location>
        <begin position="429"/>
        <end position="431"/>
    </location>
</feature>
<feature type="strand" evidence="12">
    <location>
        <begin position="433"/>
        <end position="435"/>
    </location>
</feature>
<feature type="turn" evidence="13">
    <location>
        <begin position="439"/>
        <end position="441"/>
    </location>
</feature>
<feature type="strand" evidence="12">
    <location>
        <begin position="444"/>
        <end position="446"/>
    </location>
</feature>
<feature type="turn" evidence="13">
    <location>
        <begin position="447"/>
        <end position="449"/>
    </location>
</feature>
<feature type="helix" evidence="13">
    <location>
        <begin position="455"/>
        <end position="461"/>
    </location>
</feature>
<sequence>MIVFVRFNSSYGFPVEVDSDTSIFQLKEVVAKRQGVPADQLRVIFAGKELQNHLTVQNCDLEQQSIVHIVQRPQRKSHETNASGGDKPQSTPEGSIWEPRSLTRVDLSSHILPADSVGLAVILDTDSKSDSEAARGPEAKPTYHSFFVYCKGPCHKVQPGKLRVQCGTCRQATLTLAQGPSCWDDVLIPNRMSGECQSPDCPGTRAEFFFKCGAHPTSDKDTSVALNLITNNSRSIPCIACTDVRNPVLVFQCNHRHVICLDCFHLYCVTRLNDRQFVHDAQLGYSLPCVAGCPNSLIKELHHFRILGEEQYNRYQQYGAEECVLQMGGVLCPRPGCGAGLLPEQGQKKVTCEGGNGLGCGFVFCRDCKEAYHEGECDSMFEASGATSQAYRVDQRAAEQARWEEASKETIKKTTKPCPRCNVPIEKNGGCMHMKCPQPQCKLEWCWNCGCEWNRACMGDHWFDV</sequence>
<protein>
    <recommendedName>
        <fullName evidence="10">E3 ubiquitin-protein ligase parkin</fullName>
        <ecNumber evidence="8">2.3.2.31</ecNumber>
    </recommendedName>
    <alternativeName>
        <fullName evidence="1">Parkin RBR E3 ubiquitin-protein ligase</fullName>
    </alternativeName>
</protein>
<name>PRKN_RAT</name>
<organism>
    <name type="scientific">Rattus norvegicus</name>
    <name type="common">Rat</name>
    <dbReference type="NCBI Taxonomy" id="10116"/>
    <lineage>
        <taxon>Eukaryota</taxon>
        <taxon>Metazoa</taxon>
        <taxon>Chordata</taxon>
        <taxon>Craniata</taxon>
        <taxon>Vertebrata</taxon>
        <taxon>Euteleostomi</taxon>
        <taxon>Mammalia</taxon>
        <taxon>Eutheria</taxon>
        <taxon>Euarchontoglires</taxon>
        <taxon>Glires</taxon>
        <taxon>Rodentia</taxon>
        <taxon>Myomorpha</taxon>
        <taxon>Muroidea</taxon>
        <taxon>Muridae</taxon>
        <taxon>Murinae</taxon>
        <taxon>Rattus</taxon>
    </lineage>
</organism>
<gene>
    <name evidence="1" type="primary">Prkn</name>
    <name evidence="11" type="synonym">Park2</name>
</gene>
<accession>Q9JK66</accession>
<accession>Q8K5C3</accession>
<accession>Q8K5C4</accession>
<accession>Q8K5C5</accession>
<accession>Q8K5C6</accession>
<accession>Q8VHY6</accession>
<accession>Q9JLL1</accession>
<accession>Q9JM64</accession>
<keyword id="KW-0002">3D-structure</keyword>
<keyword id="KW-0025">Alternative splicing</keyword>
<keyword id="KW-0072">Autophagy</keyword>
<keyword id="KW-0966">Cell projection</keyword>
<keyword id="KW-0963">Cytoplasm</keyword>
<keyword id="KW-0256">Endoplasmic reticulum</keyword>
<keyword id="KW-1017">Isopeptide bond</keyword>
<keyword id="KW-0472">Membrane</keyword>
<keyword id="KW-0479">Metal-binding</keyword>
<keyword id="KW-0496">Mitochondrion</keyword>
<keyword id="KW-1000">Mitochondrion outer membrane</keyword>
<keyword id="KW-0539">Nucleus</keyword>
<keyword id="KW-0597">Phosphoprotein</keyword>
<keyword id="KW-1185">Reference proteome</keyword>
<keyword id="KW-0677">Repeat</keyword>
<keyword id="KW-0770">Synapse</keyword>
<keyword id="KW-0804">Transcription</keyword>
<keyword id="KW-0805">Transcription regulation</keyword>
<keyword id="KW-0808">Transferase</keyword>
<keyword id="KW-0832">Ubl conjugation</keyword>
<keyword id="KW-0833">Ubl conjugation pathway</keyword>
<keyword id="KW-0862">Zinc</keyword>
<keyword id="KW-0863">Zinc-finger</keyword>
<evidence type="ECO:0000250" key="1">
    <source>
        <dbReference type="UniProtKB" id="O60260"/>
    </source>
</evidence>
<evidence type="ECO:0000250" key="2">
    <source>
        <dbReference type="UniProtKB" id="Q9WVS6"/>
    </source>
</evidence>
<evidence type="ECO:0000255" key="3">
    <source>
        <dbReference type="PROSITE-ProRule" id="PRU00214"/>
    </source>
</evidence>
<evidence type="ECO:0000255" key="4">
    <source>
        <dbReference type="PROSITE-ProRule" id="PRU01221"/>
    </source>
</evidence>
<evidence type="ECO:0000256" key="5">
    <source>
        <dbReference type="SAM" id="MobiDB-lite"/>
    </source>
</evidence>
<evidence type="ECO:0000269" key="6">
    <source>
    </source>
</evidence>
<evidence type="ECO:0000269" key="7">
    <source>
    </source>
</evidence>
<evidence type="ECO:0000269" key="8">
    <source>
    </source>
</evidence>
<evidence type="ECO:0000303" key="9">
    <source>
    </source>
</evidence>
<evidence type="ECO:0000305" key="10"/>
<evidence type="ECO:0000312" key="11">
    <source>
        <dbReference type="RGD" id="61797"/>
    </source>
</evidence>
<evidence type="ECO:0007829" key="12">
    <source>
        <dbReference type="PDB" id="4K7D"/>
    </source>
</evidence>
<evidence type="ECO:0007829" key="13">
    <source>
        <dbReference type="PDB" id="4ZYN"/>
    </source>
</evidence>
<evidence type="ECO:0007829" key="14">
    <source>
        <dbReference type="PDB" id="7US1"/>
    </source>
</evidence>
<proteinExistence type="evidence at protein level"/>
<reference key="1">
    <citation type="journal article" date="2000" name="Brain Res. Mol. Brain Res.">
        <title>Cloning and distribution of the rat parkin mRNA.</title>
        <authorList>
            <person name="D'Agata V."/>
            <person name="Zhao W."/>
            <person name="Cavallaro S."/>
        </authorList>
    </citation>
    <scope>NUCLEOTIDE SEQUENCE [MRNA] (ISOFORMS 1; 2; 3; 4; 5 AND 6)</scope>
    <source>
        <strain>Sprague-Dawley</strain>
    </source>
</reference>
<reference key="2">
    <citation type="journal article" date="2000" name="J. Neurochem.">
        <title>Cloning of rat parkin cDNA and distribution of parkin in rat brain.</title>
        <authorList>
            <person name="Gu W.-J."/>
            <person name="Abbas N."/>
            <person name="Lagunes M.Z."/>
            <person name="Parent A."/>
            <person name="Pradier L."/>
            <person name="Bohme G.A."/>
            <person name="Agid Y."/>
            <person name="Hirsch E.C."/>
            <person name="Raisman-Vozari R."/>
            <person name="Brice A."/>
        </authorList>
    </citation>
    <scope>NUCLEOTIDE SEQUENCE [MRNA] (ISOFORM 1)</scope>
    <scope>TISSUE SPECIFICITY</scope>
    <source>
        <tissue>Hypothalamus</tissue>
    </source>
</reference>
<reference key="3">
    <citation type="submission" date="2000-03" db="EMBL/GenBank/DDBJ databases">
        <title>The expression of parkin mRNA in developing, adult and ageing rat CNS.</title>
        <authorList>
            <person name="Hattori N."/>
            <person name="Wang M."/>
            <person name="Mizuno Y."/>
        </authorList>
    </citation>
    <scope>NUCLEOTIDE SEQUENCE [MRNA] (ISOFORM 1)</scope>
    <source>
        <strain>Sprague-Dawley</strain>
    </source>
</reference>
<reference key="4">
    <citation type="submission" date="2000-04" db="EMBL/GenBank/DDBJ databases">
        <title>Molecular cloning of rat Parkin gene.</title>
        <authorList>
            <person name="Soda M."/>
            <person name="Imai Y."/>
            <person name="Takahashi R."/>
        </authorList>
    </citation>
    <scope>NUCLEOTIDE SEQUENCE [MRNA] (ISOFORM 1)</scope>
    <source>
        <strain>Sprague-Dawley</strain>
        <tissue>Brain</tissue>
    </source>
</reference>
<reference key="5">
    <citation type="journal article" date="2003" name="Hum. Mol. Genet.">
        <title>The autosomal recessive juvenile Parkinson disease gene product, parkin, interacts with and ubiquitinates synaptotagmin XI.</title>
        <authorList>
            <person name="Huynh D.P."/>
            <person name="Scoles D.R."/>
            <person name="Nguyen D."/>
            <person name="Pulst S.M."/>
        </authorList>
    </citation>
    <scope>SUBCELLULAR LOCATION</scope>
</reference>
<reference key="6">
    <citation type="journal article" date="2006" name="J. Neurosci. Res.">
        <title>Functional modulation of parkin through physical interaction with SUMO-1.</title>
        <authorList>
            <person name="Um J.W."/>
            <person name="Chung K.C."/>
        </authorList>
    </citation>
    <scope>INTERACTION WITH SUMO1</scope>
</reference>
<reference key="7">
    <citation type="journal article" date="2013" name="Science">
        <title>Structure of parkin reveals mechanisms for ubiquitin ligase activation.</title>
        <authorList>
            <person name="Trempe J.F."/>
            <person name="Sauve V."/>
            <person name="Grenier K."/>
            <person name="Seirafi M."/>
            <person name="Tang M.Y."/>
            <person name="Menade M."/>
            <person name="Al-Abdul-Wahid S."/>
            <person name="Krett J."/>
            <person name="Wong K."/>
            <person name="Kozlov G."/>
            <person name="Nagar B."/>
            <person name="Fon E.A."/>
            <person name="Gehring K."/>
        </authorList>
    </citation>
    <scope>X-RAY CRYSTALLOGRAPHY (6.5 ANGSTROMS)</scope>
    <scope>X-RAY CRYSTALLOGRAPHY (2.8 ANGSTROMS) OF 141-465</scope>
    <scope>RING-TYPE ZINC-FINGERS</scope>
    <scope>CATALYTIC ACTIVITY</scope>
    <scope>ACTIVE SITE</scope>
    <scope>AUTOUBIQUITINATION</scope>
    <scope>ACTIVITY REGULATION</scope>
    <scope>MUTAGENESIS OF TRP-403</scope>
</reference>